<evidence type="ECO:0000250" key="1"/>
<evidence type="ECO:0000255" key="2"/>
<evidence type="ECO:0000305" key="3"/>
<gene>
    <name type="primary">lepB</name>
    <name type="ordered locus">A1G_00900</name>
</gene>
<dbReference type="EC" id="3.4.21.89"/>
<dbReference type="EMBL" id="AY134668">
    <property type="protein sequence ID" value="AAN04256.1"/>
    <property type="molecule type" value="Genomic_DNA"/>
</dbReference>
<dbReference type="EMBL" id="CP000848">
    <property type="protein sequence ID" value="ABV75762.1"/>
    <property type="molecule type" value="Genomic_DNA"/>
</dbReference>
<dbReference type="RefSeq" id="WP_012150374.1">
    <property type="nucleotide sequence ID" value="NZ_CP121767.1"/>
</dbReference>
<dbReference type="SMR" id="A8GQT7"/>
<dbReference type="MEROPS" id="S26.001"/>
<dbReference type="GeneID" id="79936949"/>
<dbReference type="KEGG" id="rri:A1G_00900"/>
<dbReference type="HOGENOM" id="CLU_028723_1_2_5"/>
<dbReference type="Proteomes" id="UP000006832">
    <property type="component" value="Chromosome"/>
</dbReference>
<dbReference type="GO" id="GO:0005886">
    <property type="term" value="C:plasma membrane"/>
    <property type="evidence" value="ECO:0007669"/>
    <property type="project" value="UniProtKB-SubCell"/>
</dbReference>
<dbReference type="GO" id="GO:0004252">
    <property type="term" value="F:serine-type endopeptidase activity"/>
    <property type="evidence" value="ECO:0007669"/>
    <property type="project" value="UniProtKB-EC"/>
</dbReference>
<dbReference type="GO" id="GO:0006465">
    <property type="term" value="P:signal peptide processing"/>
    <property type="evidence" value="ECO:0007669"/>
    <property type="project" value="InterPro"/>
</dbReference>
<dbReference type="CDD" id="cd06530">
    <property type="entry name" value="S26_SPase_I"/>
    <property type="match status" value="1"/>
</dbReference>
<dbReference type="Gene3D" id="2.10.109.10">
    <property type="entry name" value="Umud Fragment, subunit A"/>
    <property type="match status" value="1"/>
</dbReference>
<dbReference type="InterPro" id="IPR036286">
    <property type="entry name" value="LexA/Signal_pep-like_sf"/>
</dbReference>
<dbReference type="InterPro" id="IPR000223">
    <property type="entry name" value="Pept_S26A_signal_pept_1"/>
</dbReference>
<dbReference type="InterPro" id="IPR019758">
    <property type="entry name" value="Pept_S26A_signal_pept_1_CS"/>
</dbReference>
<dbReference type="InterPro" id="IPR019757">
    <property type="entry name" value="Pept_S26A_signal_pept_1_Lys-AS"/>
</dbReference>
<dbReference type="InterPro" id="IPR019533">
    <property type="entry name" value="Peptidase_S26"/>
</dbReference>
<dbReference type="NCBIfam" id="TIGR02227">
    <property type="entry name" value="sigpep_I_bact"/>
    <property type="match status" value="1"/>
</dbReference>
<dbReference type="PANTHER" id="PTHR43390:SF1">
    <property type="entry name" value="CHLOROPLAST PROCESSING PEPTIDASE"/>
    <property type="match status" value="1"/>
</dbReference>
<dbReference type="PANTHER" id="PTHR43390">
    <property type="entry name" value="SIGNAL PEPTIDASE I"/>
    <property type="match status" value="1"/>
</dbReference>
<dbReference type="Pfam" id="PF10502">
    <property type="entry name" value="Peptidase_S26"/>
    <property type="match status" value="1"/>
</dbReference>
<dbReference type="PRINTS" id="PR00727">
    <property type="entry name" value="LEADERPTASE"/>
</dbReference>
<dbReference type="SUPFAM" id="SSF51306">
    <property type="entry name" value="LexA/Signal peptidase"/>
    <property type="match status" value="1"/>
</dbReference>
<dbReference type="PROSITE" id="PS00760">
    <property type="entry name" value="SPASE_I_2"/>
    <property type="match status" value="1"/>
</dbReference>
<dbReference type="PROSITE" id="PS00761">
    <property type="entry name" value="SPASE_I_3"/>
    <property type="match status" value="1"/>
</dbReference>
<protein>
    <recommendedName>
        <fullName>Signal peptidase I</fullName>
        <shortName>SPase I</shortName>
        <ecNumber>3.4.21.89</ecNumber>
    </recommendedName>
    <alternativeName>
        <fullName>Leader peptidase I</fullName>
    </alternativeName>
</protein>
<comment type="function">
    <text>Complements E.coli mutants temperature-sensitive for LepB function.</text>
</comment>
<comment type="catalytic activity">
    <reaction>
        <text>Cleavage of hydrophobic, N-terminal signal or leader sequences from secreted and periplasmic proteins.</text>
        <dbReference type="EC" id="3.4.21.89"/>
    </reaction>
</comment>
<comment type="subcellular location">
    <subcellularLocation>
        <location evidence="3">Cell inner membrane</location>
        <topology evidence="3">Single-pass type II membrane protein</topology>
    </subcellularLocation>
</comment>
<comment type="miscellaneous">
    <text>Belongs to an operon consisting of at least secF-nuoF-lepB-rnc.</text>
</comment>
<comment type="similarity">
    <text evidence="3">Belongs to the peptidase S26 family.</text>
</comment>
<keyword id="KW-0997">Cell inner membrane</keyword>
<keyword id="KW-1003">Cell membrane</keyword>
<keyword id="KW-0378">Hydrolase</keyword>
<keyword id="KW-0472">Membrane</keyword>
<keyword id="KW-0812">Transmembrane</keyword>
<keyword id="KW-1133">Transmembrane helix</keyword>
<name>LEP_RICRS</name>
<accession>A8GQT7</accession>
<accession>Q8GE73</accession>
<reference key="1">
    <citation type="journal article" date="2003" name="J. Bacteriol.">
        <title>Molecular and functional analysis of the lepB gene, encoding a type I signal peptidase from Rickettsia rickettsii and Rickettsia typhi.</title>
        <authorList>
            <person name="Rahman M.S."/>
            <person name="Simser J.A."/>
            <person name="Macaluso K.R."/>
            <person name="Azad A.F."/>
        </authorList>
    </citation>
    <scope>NUCLEOTIDE SEQUENCE [GENOMIC DNA]</scope>
    <scope>OPERON STRUCTURE</scope>
    <scope>CHARACTERIZATION IN E.COLI</scope>
</reference>
<reference key="2">
    <citation type="submission" date="2007-09" db="EMBL/GenBank/DDBJ databases">
        <title>Complete genome sequence of Rickettsia rickettsii.</title>
        <authorList>
            <person name="Madan A."/>
            <person name="Fahey J."/>
            <person name="Helton E."/>
            <person name="Ketteman M."/>
            <person name="Madan A."/>
            <person name="Rodrigues S."/>
            <person name="Sanchez A."/>
            <person name="Dasch G."/>
            <person name="Eremeeva M."/>
        </authorList>
    </citation>
    <scope>NUCLEOTIDE SEQUENCE [LARGE SCALE GENOMIC DNA]</scope>
    <source>
        <strain>Sheila Smith</strain>
    </source>
</reference>
<feature type="chain" id="PRO_0000316277" description="Signal peptidase I">
    <location>
        <begin position="1"/>
        <end position="266"/>
    </location>
</feature>
<feature type="topological domain" description="Cytoplasmic" evidence="2">
    <location>
        <begin position="1"/>
        <end position="20"/>
    </location>
</feature>
<feature type="transmembrane region" description="Helical" evidence="2">
    <location>
        <begin position="21"/>
        <end position="41"/>
    </location>
</feature>
<feature type="topological domain" description="Periplasmic" evidence="2">
    <location>
        <begin position="42"/>
        <end position="266"/>
    </location>
</feature>
<feature type="active site" evidence="1">
    <location>
        <position position="45"/>
    </location>
</feature>
<feature type="active site" evidence="1">
    <location>
        <position position="108"/>
    </location>
</feature>
<sequence length="266" mass="31083">MQTDNTKSNTNKTAKQEWGSFAFVICIALLIRILIMEPFTVPTGSMKATILENDYIFSTKYSYGYSNYSLSFFDFIPLFKGRIFAREPDRGDIVVFRPPNDMSVRYIKRLIGLPGDKIQLIDDVIYINDKKIERTEVGTYISEEGIKYLKFKETLPNGRTYFSYKLAPIYGVIYNDRYGNTDVFYVPEGKYFFLGDNRDQSNDSRVNLGFVPFENFIAKAQFIWFSTKITWWDNDIGVINLVLKLKPWVESVRLNRIFRNLYNTDA</sequence>
<organism>
    <name type="scientific">Rickettsia rickettsii (strain Sheila Smith)</name>
    <dbReference type="NCBI Taxonomy" id="392021"/>
    <lineage>
        <taxon>Bacteria</taxon>
        <taxon>Pseudomonadati</taxon>
        <taxon>Pseudomonadota</taxon>
        <taxon>Alphaproteobacteria</taxon>
        <taxon>Rickettsiales</taxon>
        <taxon>Rickettsiaceae</taxon>
        <taxon>Rickettsieae</taxon>
        <taxon>Rickettsia</taxon>
        <taxon>spotted fever group</taxon>
    </lineage>
</organism>
<proteinExistence type="evidence at protein level"/>